<organism>
    <name type="scientific">Agrobacterium fabrum (strain C58 / ATCC 33970)</name>
    <name type="common">Agrobacterium tumefaciens (strain C58)</name>
    <dbReference type="NCBI Taxonomy" id="176299"/>
    <lineage>
        <taxon>Bacteria</taxon>
        <taxon>Pseudomonadati</taxon>
        <taxon>Pseudomonadota</taxon>
        <taxon>Alphaproteobacteria</taxon>
        <taxon>Hyphomicrobiales</taxon>
        <taxon>Rhizobiaceae</taxon>
        <taxon>Rhizobium/Agrobacterium group</taxon>
        <taxon>Agrobacterium</taxon>
        <taxon>Agrobacterium tumefaciens complex</taxon>
    </lineage>
</organism>
<accession>Q8UE38</accession>
<gene>
    <name evidence="1" type="primary">adk</name>
    <name type="ordered locus">Atu1926</name>
    <name type="ORF">AGR_C_3521</name>
</gene>
<sequence>MRLIFLGPPGAGKGTQAKRLTDKYGIPQLSTGDMLRAAVSAGTEIGKRAKAVMDAGGLVSDDIVNQIVSERIEAPDCAKGFILDGYPRTVPQAKALADNMRKKNQVLDAVIELKVDEEALIRRIENRVAETIAAGGTVRSDDNPEAFRKRLTEYREKTAPLSAYYSEQGELVTLDGMADVDAVTEAIERVLEKASA</sequence>
<evidence type="ECO:0000255" key="1">
    <source>
        <dbReference type="HAMAP-Rule" id="MF_00235"/>
    </source>
</evidence>
<name>KAD_AGRFC</name>
<dbReference type="EC" id="2.7.4.3" evidence="1"/>
<dbReference type="EMBL" id="AE007869">
    <property type="protein sequence ID" value="AAK87687.1"/>
    <property type="molecule type" value="Genomic_DNA"/>
</dbReference>
<dbReference type="PIR" id="AD2813">
    <property type="entry name" value="AD2813"/>
</dbReference>
<dbReference type="PIR" id="F97591">
    <property type="entry name" value="F97591"/>
</dbReference>
<dbReference type="RefSeq" id="NP_354902.1">
    <property type="nucleotide sequence ID" value="NC_003062.2"/>
</dbReference>
<dbReference type="RefSeq" id="WP_006313983.1">
    <property type="nucleotide sequence ID" value="NC_003062.2"/>
</dbReference>
<dbReference type="SMR" id="Q8UE38"/>
<dbReference type="STRING" id="176299.Atu1926"/>
<dbReference type="EnsemblBacteria" id="AAK87687">
    <property type="protein sequence ID" value="AAK87687"/>
    <property type="gene ID" value="Atu1926"/>
</dbReference>
<dbReference type="GeneID" id="1133964"/>
<dbReference type="KEGG" id="atu:Atu1926"/>
<dbReference type="PATRIC" id="fig|176299.10.peg.1937"/>
<dbReference type="eggNOG" id="COG0563">
    <property type="taxonomic scope" value="Bacteria"/>
</dbReference>
<dbReference type="HOGENOM" id="CLU_032354_4_1_5"/>
<dbReference type="OrthoDB" id="9805030at2"/>
<dbReference type="PhylomeDB" id="Q8UE38"/>
<dbReference type="BioCyc" id="AGRO:ATU1926-MONOMER"/>
<dbReference type="UniPathway" id="UPA00588">
    <property type="reaction ID" value="UER00649"/>
</dbReference>
<dbReference type="Proteomes" id="UP000000813">
    <property type="component" value="Chromosome circular"/>
</dbReference>
<dbReference type="GO" id="GO:0005737">
    <property type="term" value="C:cytoplasm"/>
    <property type="evidence" value="ECO:0007669"/>
    <property type="project" value="UniProtKB-SubCell"/>
</dbReference>
<dbReference type="GO" id="GO:0004017">
    <property type="term" value="F:adenylate kinase activity"/>
    <property type="evidence" value="ECO:0007669"/>
    <property type="project" value="UniProtKB-UniRule"/>
</dbReference>
<dbReference type="GO" id="GO:0005524">
    <property type="term" value="F:ATP binding"/>
    <property type="evidence" value="ECO:0007669"/>
    <property type="project" value="UniProtKB-UniRule"/>
</dbReference>
<dbReference type="GO" id="GO:0044209">
    <property type="term" value="P:AMP salvage"/>
    <property type="evidence" value="ECO:0007669"/>
    <property type="project" value="UniProtKB-UniRule"/>
</dbReference>
<dbReference type="CDD" id="cd01428">
    <property type="entry name" value="ADK"/>
    <property type="match status" value="1"/>
</dbReference>
<dbReference type="Gene3D" id="3.40.50.300">
    <property type="entry name" value="P-loop containing nucleotide triphosphate hydrolases"/>
    <property type="match status" value="1"/>
</dbReference>
<dbReference type="HAMAP" id="MF_00235">
    <property type="entry name" value="Adenylate_kinase_Adk"/>
    <property type="match status" value="1"/>
</dbReference>
<dbReference type="InterPro" id="IPR006259">
    <property type="entry name" value="Adenyl_kin_sub"/>
</dbReference>
<dbReference type="InterPro" id="IPR000850">
    <property type="entry name" value="Adenylat/UMP-CMP_kin"/>
</dbReference>
<dbReference type="InterPro" id="IPR033690">
    <property type="entry name" value="Adenylat_kinase_CS"/>
</dbReference>
<dbReference type="InterPro" id="IPR027417">
    <property type="entry name" value="P-loop_NTPase"/>
</dbReference>
<dbReference type="NCBIfam" id="TIGR01351">
    <property type="entry name" value="adk"/>
    <property type="match status" value="1"/>
</dbReference>
<dbReference type="NCBIfam" id="NF001381">
    <property type="entry name" value="PRK00279.1-3"/>
    <property type="match status" value="1"/>
</dbReference>
<dbReference type="NCBIfam" id="NF011100">
    <property type="entry name" value="PRK14527.1"/>
    <property type="match status" value="1"/>
</dbReference>
<dbReference type="NCBIfam" id="NF011104">
    <property type="entry name" value="PRK14531.1"/>
    <property type="match status" value="1"/>
</dbReference>
<dbReference type="NCBIfam" id="NF011105">
    <property type="entry name" value="PRK14532.1"/>
    <property type="match status" value="1"/>
</dbReference>
<dbReference type="PANTHER" id="PTHR23359">
    <property type="entry name" value="NUCLEOTIDE KINASE"/>
    <property type="match status" value="1"/>
</dbReference>
<dbReference type="Pfam" id="PF00406">
    <property type="entry name" value="ADK"/>
    <property type="match status" value="1"/>
</dbReference>
<dbReference type="PRINTS" id="PR00094">
    <property type="entry name" value="ADENYLTKNASE"/>
</dbReference>
<dbReference type="SUPFAM" id="SSF52540">
    <property type="entry name" value="P-loop containing nucleoside triphosphate hydrolases"/>
    <property type="match status" value="1"/>
</dbReference>
<dbReference type="PROSITE" id="PS00113">
    <property type="entry name" value="ADENYLATE_KINASE"/>
    <property type="match status" value="1"/>
</dbReference>
<reference key="1">
    <citation type="journal article" date="2001" name="Science">
        <title>The genome of the natural genetic engineer Agrobacterium tumefaciens C58.</title>
        <authorList>
            <person name="Wood D.W."/>
            <person name="Setubal J.C."/>
            <person name="Kaul R."/>
            <person name="Monks D.E."/>
            <person name="Kitajima J.P."/>
            <person name="Okura V.K."/>
            <person name="Zhou Y."/>
            <person name="Chen L."/>
            <person name="Wood G.E."/>
            <person name="Almeida N.F. Jr."/>
            <person name="Woo L."/>
            <person name="Chen Y."/>
            <person name="Paulsen I.T."/>
            <person name="Eisen J.A."/>
            <person name="Karp P.D."/>
            <person name="Bovee D. Sr."/>
            <person name="Chapman P."/>
            <person name="Clendenning J."/>
            <person name="Deatherage G."/>
            <person name="Gillet W."/>
            <person name="Grant C."/>
            <person name="Kutyavin T."/>
            <person name="Levy R."/>
            <person name="Li M.-J."/>
            <person name="McClelland E."/>
            <person name="Palmieri A."/>
            <person name="Raymond C."/>
            <person name="Rouse G."/>
            <person name="Saenphimmachak C."/>
            <person name="Wu Z."/>
            <person name="Romero P."/>
            <person name="Gordon D."/>
            <person name="Zhang S."/>
            <person name="Yoo H."/>
            <person name="Tao Y."/>
            <person name="Biddle P."/>
            <person name="Jung M."/>
            <person name="Krespan W."/>
            <person name="Perry M."/>
            <person name="Gordon-Kamm B."/>
            <person name="Liao L."/>
            <person name="Kim S."/>
            <person name="Hendrick C."/>
            <person name="Zhao Z.-Y."/>
            <person name="Dolan M."/>
            <person name="Chumley F."/>
            <person name="Tingey S.V."/>
            <person name="Tomb J.-F."/>
            <person name="Gordon M.P."/>
            <person name="Olson M.V."/>
            <person name="Nester E.W."/>
        </authorList>
    </citation>
    <scope>NUCLEOTIDE SEQUENCE [LARGE SCALE GENOMIC DNA]</scope>
    <source>
        <strain>C58 / ATCC 33970</strain>
    </source>
</reference>
<reference key="2">
    <citation type="journal article" date="2001" name="Science">
        <title>Genome sequence of the plant pathogen and biotechnology agent Agrobacterium tumefaciens C58.</title>
        <authorList>
            <person name="Goodner B."/>
            <person name="Hinkle G."/>
            <person name="Gattung S."/>
            <person name="Miller N."/>
            <person name="Blanchard M."/>
            <person name="Qurollo B."/>
            <person name="Goldman B.S."/>
            <person name="Cao Y."/>
            <person name="Askenazi M."/>
            <person name="Halling C."/>
            <person name="Mullin L."/>
            <person name="Houmiel K."/>
            <person name="Gordon J."/>
            <person name="Vaudin M."/>
            <person name="Iartchouk O."/>
            <person name="Epp A."/>
            <person name="Liu F."/>
            <person name="Wollam C."/>
            <person name="Allinger M."/>
            <person name="Doughty D."/>
            <person name="Scott C."/>
            <person name="Lappas C."/>
            <person name="Markelz B."/>
            <person name="Flanagan C."/>
            <person name="Crowell C."/>
            <person name="Gurson J."/>
            <person name="Lomo C."/>
            <person name="Sear C."/>
            <person name="Strub G."/>
            <person name="Cielo C."/>
            <person name="Slater S."/>
        </authorList>
    </citation>
    <scope>NUCLEOTIDE SEQUENCE [LARGE SCALE GENOMIC DNA]</scope>
    <source>
        <strain>C58 / ATCC 33970</strain>
    </source>
</reference>
<protein>
    <recommendedName>
        <fullName evidence="1">Adenylate kinase</fullName>
        <shortName evidence="1">AK</shortName>
        <ecNumber evidence="1">2.7.4.3</ecNumber>
    </recommendedName>
    <alternativeName>
        <fullName evidence="1">ATP-AMP transphosphorylase</fullName>
    </alternativeName>
    <alternativeName>
        <fullName evidence="1">ATP:AMP phosphotransferase</fullName>
    </alternativeName>
    <alternativeName>
        <fullName evidence="1">Adenylate monophosphate kinase</fullName>
    </alternativeName>
</protein>
<keyword id="KW-0067">ATP-binding</keyword>
<keyword id="KW-0963">Cytoplasm</keyword>
<keyword id="KW-0418">Kinase</keyword>
<keyword id="KW-0545">Nucleotide biosynthesis</keyword>
<keyword id="KW-0547">Nucleotide-binding</keyword>
<keyword id="KW-1185">Reference proteome</keyword>
<keyword id="KW-0808">Transferase</keyword>
<proteinExistence type="inferred from homology"/>
<comment type="function">
    <text evidence="1">Catalyzes the reversible transfer of the terminal phosphate group between ATP and AMP. Plays an important role in cellular energy homeostasis and in adenine nucleotide metabolism.</text>
</comment>
<comment type="catalytic activity">
    <reaction evidence="1">
        <text>AMP + ATP = 2 ADP</text>
        <dbReference type="Rhea" id="RHEA:12973"/>
        <dbReference type="ChEBI" id="CHEBI:30616"/>
        <dbReference type="ChEBI" id="CHEBI:456215"/>
        <dbReference type="ChEBI" id="CHEBI:456216"/>
        <dbReference type="EC" id="2.7.4.3"/>
    </reaction>
</comment>
<comment type="pathway">
    <text evidence="1">Purine metabolism; AMP biosynthesis via salvage pathway; AMP from ADP: step 1/1.</text>
</comment>
<comment type="subunit">
    <text evidence="1">Monomer.</text>
</comment>
<comment type="subcellular location">
    <subcellularLocation>
        <location evidence="1">Cytoplasm</location>
    </subcellularLocation>
</comment>
<comment type="domain">
    <text evidence="1">Consists of three domains, a large central CORE domain and two small peripheral domains, NMPbind and LID, which undergo movements during catalysis. The LID domain closes over the site of phosphoryl transfer upon ATP binding. Assembling and dissambling the active center during each catalytic cycle provides an effective means to prevent ATP hydrolysis.</text>
</comment>
<comment type="similarity">
    <text evidence="1">Belongs to the adenylate kinase family.</text>
</comment>
<feature type="chain" id="PRO_0000158715" description="Adenylate kinase">
    <location>
        <begin position="1"/>
        <end position="196"/>
    </location>
</feature>
<feature type="region of interest" description="NMP" evidence="1">
    <location>
        <begin position="30"/>
        <end position="59"/>
    </location>
</feature>
<feature type="region of interest" description="LID" evidence="1">
    <location>
        <begin position="126"/>
        <end position="142"/>
    </location>
</feature>
<feature type="binding site" evidence="1">
    <location>
        <begin position="10"/>
        <end position="15"/>
    </location>
    <ligand>
        <name>ATP</name>
        <dbReference type="ChEBI" id="CHEBI:30616"/>
    </ligand>
</feature>
<feature type="binding site" evidence="1">
    <location>
        <position position="31"/>
    </location>
    <ligand>
        <name>AMP</name>
        <dbReference type="ChEBI" id="CHEBI:456215"/>
    </ligand>
</feature>
<feature type="binding site" evidence="1">
    <location>
        <position position="36"/>
    </location>
    <ligand>
        <name>AMP</name>
        <dbReference type="ChEBI" id="CHEBI:456215"/>
    </ligand>
</feature>
<feature type="binding site" evidence="1">
    <location>
        <begin position="57"/>
        <end position="59"/>
    </location>
    <ligand>
        <name>AMP</name>
        <dbReference type="ChEBI" id="CHEBI:456215"/>
    </ligand>
</feature>
<feature type="binding site" evidence="1">
    <location>
        <begin position="85"/>
        <end position="88"/>
    </location>
    <ligand>
        <name>AMP</name>
        <dbReference type="ChEBI" id="CHEBI:456215"/>
    </ligand>
</feature>
<feature type="binding site" evidence="1">
    <location>
        <position position="92"/>
    </location>
    <ligand>
        <name>AMP</name>
        <dbReference type="ChEBI" id="CHEBI:456215"/>
    </ligand>
</feature>
<feature type="binding site" evidence="1">
    <location>
        <position position="127"/>
    </location>
    <ligand>
        <name>ATP</name>
        <dbReference type="ChEBI" id="CHEBI:30616"/>
    </ligand>
</feature>
<feature type="binding site" evidence="1">
    <location>
        <position position="139"/>
    </location>
    <ligand>
        <name>AMP</name>
        <dbReference type="ChEBI" id="CHEBI:456215"/>
    </ligand>
</feature>
<feature type="binding site" evidence="1">
    <location>
        <position position="150"/>
    </location>
    <ligand>
        <name>AMP</name>
        <dbReference type="ChEBI" id="CHEBI:456215"/>
    </ligand>
</feature>
<feature type="binding site" evidence="1">
    <location>
        <position position="178"/>
    </location>
    <ligand>
        <name>ATP</name>
        <dbReference type="ChEBI" id="CHEBI:30616"/>
    </ligand>
</feature>